<gene>
    <name type="primary">ai2a</name>
    <name type="ORF">DDB_G0294421</name>
</gene>
<reference key="1">
    <citation type="journal article" date="1997" name="Curr. Genet.">
        <title>Group-I introns in the cytochrome c oxidase genes of Dictyostelium discoideum: two related ORFs in one loop of a group-I intron, a cox1/2 hybrid gene and an unusually large cox3 gene.</title>
        <authorList>
            <person name="Ogawa S."/>
            <person name="Matsuo K."/>
            <person name="Angata K."/>
            <person name="Yanagisawa K."/>
            <person name="Tanaka Y."/>
        </authorList>
    </citation>
    <scope>NUCLEOTIDE SEQUENCE [GENOMIC DNA]</scope>
    <source>
        <strain>AX3</strain>
    </source>
</reference>
<reference key="2">
    <citation type="journal article" date="2000" name="Mol. Gen. Genet.">
        <title>The mitochondrial DNA of Dictyostelium discoideum: complete sequence, gene content and genome organization.</title>
        <authorList>
            <person name="Ogawa S."/>
            <person name="Yoshino R."/>
            <person name="Angata K."/>
            <person name="Iwamoto M."/>
            <person name="Pi M."/>
            <person name="Kuroe K."/>
            <person name="Matsuo K."/>
            <person name="Morio T."/>
            <person name="Urushihara H."/>
            <person name="Yanagisawa K."/>
            <person name="Tanaka Y."/>
        </authorList>
    </citation>
    <scope>NUCLEOTIDE SEQUENCE [LARGE SCALE GENOMIC DNA]</scope>
    <source>
        <strain>AX3</strain>
    </source>
</reference>
<reference key="3">
    <citation type="journal article" date="1997" name="Gene">
        <title>A site-specific DNA endonuclease specified by one of two ORFs encoded by a group I intron in Dictyostelium discoideum mitochondrial DNA.</title>
        <authorList>
            <person name="Ogawa S."/>
            <person name="Naito K."/>
            <person name="Angata K."/>
            <person name="Morio T."/>
            <person name="Urushihara H."/>
            <person name="Tanaka Y."/>
        </authorList>
    </citation>
    <scope>FUNCTION</scope>
    <scope>SUBCELLULAR LOCATION</scope>
</reference>
<protein>
    <recommendedName>
        <fullName>Intron-encoded DNA endonuclease ai2a</fullName>
        <ecNumber>3.1.-.-</ecNumber>
    </recommendedName>
</protein>
<evidence type="ECO:0000269" key="1">
    <source>
    </source>
</evidence>
<evidence type="ECO:0000305" key="2"/>
<sequence>MKKEEKKENKKREQNQISSKKWNEWLAGLIDGAGKFTLSKSGYANLDILLELRDEKCHIELKQRFGGEIKRKETTLIRYRVHRLYGIRQLIACVNGHIRHPLRKIEFKEICMHYNVEYKEPETLTFANGWLSGYFDAVGLIEFSTEQDQLYLAFRHKKNTMLNELEIQKCLGVNLTCEQNGCSCESVTLYKINKKTVLSLYKYFKKYRLRSSIKTTQILLIPQFYEIQNETKEINDMQVKQKLWKQFFKKWYVDEMVKYESVKLANYYKSKTSPEKRVKKLIKLKFHRNERIRKRAERLELQKEKEKKA</sequence>
<feature type="chain" id="PRO_0000386627" description="Intron-encoded DNA endonuclease ai2a">
    <location>
        <begin position="1"/>
        <end position="309"/>
    </location>
</feature>
<geneLocation type="mitochondrion"/>
<keyword id="KW-0255">Endonuclease</keyword>
<keyword id="KW-0378">Hydrolase</keyword>
<keyword id="KW-0404">Intron homing</keyword>
<keyword id="KW-0496">Mitochondrion</keyword>
<keyword id="KW-0540">Nuclease</keyword>
<keyword id="KW-1185">Reference proteome</keyword>
<proteinExistence type="inferred from homology"/>
<dbReference type="EC" id="3.1.-.-"/>
<dbReference type="EMBL" id="D50297">
    <property type="protein sequence ID" value="BAA21124.1"/>
    <property type="molecule type" value="Genomic_DNA"/>
</dbReference>
<dbReference type="EMBL" id="AB000109">
    <property type="protein sequence ID" value="BAA78056.1"/>
    <property type="molecule type" value="Genomic_DNA"/>
</dbReference>
<dbReference type="PIR" id="T43752">
    <property type="entry name" value="T43752"/>
</dbReference>
<dbReference type="RefSeq" id="NP_050074.1">
    <property type="nucleotide sequence ID" value="NC_000895.1"/>
</dbReference>
<dbReference type="SMR" id="O21043"/>
<dbReference type="STRING" id="44689.O21043"/>
<dbReference type="REBASE" id="3189">
    <property type="entry name" value="I-DdiI"/>
</dbReference>
<dbReference type="KEGG" id="ddi:DidioMp07"/>
<dbReference type="dictyBase" id="DDB_G0294421">
    <property type="gene designation" value="ai2a"/>
</dbReference>
<dbReference type="VEuPathDB" id="AmoebaDB:DidioMp07"/>
<dbReference type="InParanoid" id="O21043"/>
<dbReference type="OMA" id="NGHIRHP"/>
<dbReference type="PhylomeDB" id="O21043"/>
<dbReference type="PRO" id="PR:O21043"/>
<dbReference type="Proteomes" id="UP000002195">
    <property type="component" value="Mitochondrion"/>
</dbReference>
<dbReference type="GO" id="GO:0005739">
    <property type="term" value="C:mitochondrion"/>
    <property type="evidence" value="ECO:0007669"/>
    <property type="project" value="UniProtKB-SubCell"/>
</dbReference>
<dbReference type="GO" id="GO:0004520">
    <property type="term" value="F:DNA endonuclease activity"/>
    <property type="evidence" value="ECO:0000314"/>
    <property type="project" value="dictyBase"/>
</dbReference>
<dbReference type="GO" id="GO:0006314">
    <property type="term" value="P:intron homing"/>
    <property type="evidence" value="ECO:0000304"/>
    <property type="project" value="dictyBase"/>
</dbReference>
<dbReference type="Gene3D" id="3.10.28.10">
    <property type="entry name" value="Homing endonucleases"/>
    <property type="match status" value="2"/>
</dbReference>
<dbReference type="InterPro" id="IPR027434">
    <property type="entry name" value="Homing_endonucl"/>
</dbReference>
<dbReference type="PANTHER" id="PTHR37520">
    <property type="entry name" value="INTRON-ENCODED DNA ENDONUCLEASE AI2A-RELATED"/>
    <property type="match status" value="1"/>
</dbReference>
<dbReference type="PANTHER" id="PTHR37520:SF1">
    <property type="entry name" value="INTRON-ENCODED DNA ENDONUCLEASE AI2A-RELATED"/>
    <property type="match status" value="1"/>
</dbReference>
<dbReference type="SUPFAM" id="SSF55608">
    <property type="entry name" value="Homing endonucleases"/>
    <property type="match status" value="2"/>
</dbReference>
<comment type="function">
    <text evidence="1">Mitochondrial DNA endonuclease involved in intron homing. Cleaves only one strand of intronless DNA sequence at the site which coincides with the I-SceII cleavage recognition site.</text>
</comment>
<comment type="subcellular location">
    <subcellularLocation>
        <location evidence="1">Mitochondrion</location>
    </subcellularLocation>
</comment>
<comment type="miscellaneous">
    <text>The expression of ai2a in E.coli causes growth inhibition and degradation of genomic DNA.</text>
</comment>
<comment type="similarity">
    <text evidence="2">Belongs to the LAGLIDADG endonuclease family.</text>
</comment>
<accession>O21043</accession>
<name>AI2A_DICDI</name>
<organism>
    <name type="scientific">Dictyostelium discoideum</name>
    <name type="common">Social amoeba</name>
    <dbReference type="NCBI Taxonomy" id="44689"/>
    <lineage>
        <taxon>Eukaryota</taxon>
        <taxon>Amoebozoa</taxon>
        <taxon>Evosea</taxon>
        <taxon>Eumycetozoa</taxon>
        <taxon>Dictyostelia</taxon>
        <taxon>Dictyosteliales</taxon>
        <taxon>Dictyosteliaceae</taxon>
        <taxon>Dictyostelium</taxon>
    </lineage>
</organism>